<reference key="1">
    <citation type="journal article" date="2013" name="Nature">
        <title>The zebrafish reference genome sequence and its relationship to the human genome.</title>
        <authorList>
            <person name="Howe K."/>
            <person name="Clark M.D."/>
            <person name="Torroja C.F."/>
            <person name="Torrance J."/>
            <person name="Berthelot C."/>
            <person name="Muffato M."/>
            <person name="Collins J.E."/>
            <person name="Humphray S."/>
            <person name="McLaren K."/>
            <person name="Matthews L."/>
            <person name="McLaren S."/>
            <person name="Sealy I."/>
            <person name="Caccamo M."/>
            <person name="Churcher C."/>
            <person name="Scott C."/>
            <person name="Barrett J.C."/>
            <person name="Koch R."/>
            <person name="Rauch G.J."/>
            <person name="White S."/>
            <person name="Chow W."/>
            <person name="Kilian B."/>
            <person name="Quintais L.T."/>
            <person name="Guerra-Assuncao J.A."/>
            <person name="Zhou Y."/>
            <person name="Gu Y."/>
            <person name="Yen J."/>
            <person name="Vogel J.H."/>
            <person name="Eyre T."/>
            <person name="Redmond S."/>
            <person name="Banerjee R."/>
            <person name="Chi J."/>
            <person name="Fu B."/>
            <person name="Langley E."/>
            <person name="Maguire S.F."/>
            <person name="Laird G.K."/>
            <person name="Lloyd D."/>
            <person name="Kenyon E."/>
            <person name="Donaldson S."/>
            <person name="Sehra H."/>
            <person name="Almeida-King J."/>
            <person name="Loveland J."/>
            <person name="Trevanion S."/>
            <person name="Jones M."/>
            <person name="Quail M."/>
            <person name="Willey D."/>
            <person name="Hunt A."/>
            <person name="Burton J."/>
            <person name="Sims S."/>
            <person name="McLay K."/>
            <person name="Plumb B."/>
            <person name="Davis J."/>
            <person name="Clee C."/>
            <person name="Oliver K."/>
            <person name="Clark R."/>
            <person name="Riddle C."/>
            <person name="Elliot D."/>
            <person name="Threadgold G."/>
            <person name="Harden G."/>
            <person name="Ware D."/>
            <person name="Begum S."/>
            <person name="Mortimore B."/>
            <person name="Kerry G."/>
            <person name="Heath P."/>
            <person name="Phillimore B."/>
            <person name="Tracey A."/>
            <person name="Corby N."/>
            <person name="Dunn M."/>
            <person name="Johnson C."/>
            <person name="Wood J."/>
            <person name="Clark S."/>
            <person name="Pelan S."/>
            <person name="Griffiths G."/>
            <person name="Smith M."/>
            <person name="Glithero R."/>
            <person name="Howden P."/>
            <person name="Barker N."/>
            <person name="Lloyd C."/>
            <person name="Stevens C."/>
            <person name="Harley J."/>
            <person name="Holt K."/>
            <person name="Panagiotidis G."/>
            <person name="Lovell J."/>
            <person name="Beasley H."/>
            <person name="Henderson C."/>
            <person name="Gordon D."/>
            <person name="Auger K."/>
            <person name="Wright D."/>
            <person name="Collins J."/>
            <person name="Raisen C."/>
            <person name="Dyer L."/>
            <person name="Leung K."/>
            <person name="Robertson L."/>
            <person name="Ambridge K."/>
            <person name="Leongamornlert D."/>
            <person name="McGuire S."/>
            <person name="Gilderthorp R."/>
            <person name="Griffiths C."/>
            <person name="Manthravadi D."/>
            <person name="Nichol S."/>
            <person name="Barker G."/>
            <person name="Whitehead S."/>
            <person name="Kay M."/>
            <person name="Brown J."/>
            <person name="Murnane C."/>
            <person name="Gray E."/>
            <person name="Humphries M."/>
            <person name="Sycamore N."/>
            <person name="Barker D."/>
            <person name="Saunders D."/>
            <person name="Wallis J."/>
            <person name="Babbage A."/>
            <person name="Hammond S."/>
            <person name="Mashreghi-Mohammadi M."/>
            <person name="Barr L."/>
            <person name="Martin S."/>
            <person name="Wray P."/>
            <person name="Ellington A."/>
            <person name="Matthews N."/>
            <person name="Ellwood M."/>
            <person name="Woodmansey R."/>
            <person name="Clark G."/>
            <person name="Cooper J."/>
            <person name="Tromans A."/>
            <person name="Grafham D."/>
            <person name="Skuce C."/>
            <person name="Pandian R."/>
            <person name="Andrews R."/>
            <person name="Harrison E."/>
            <person name="Kimberley A."/>
            <person name="Garnett J."/>
            <person name="Fosker N."/>
            <person name="Hall R."/>
            <person name="Garner P."/>
            <person name="Kelly D."/>
            <person name="Bird C."/>
            <person name="Palmer S."/>
            <person name="Gehring I."/>
            <person name="Berger A."/>
            <person name="Dooley C.M."/>
            <person name="Ersan-Urun Z."/>
            <person name="Eser C."/>
            <person name="Geiger H."/>
            <person name="Geisler M."/>
            <person name="Karotki L."/>
            <person name="Kirn A."/>
            <person name="Konantz J."/>
            <person name="Konantz M."/>
            <person name="Oberlander M."/>
            <person name="Rudolph-Geiger S."/>
            <person name="Teucke M."/>
            <person name="Lanz C."/>
            <person name="Raddatz G."/>
            <person name="Osoegawa K."/>
            <person name="Zhu B."/>
            <person name="Rapp A."/>
            <person name="Widaa S."/>
            <person name="Langford C."/>
            <person name="Yang F."/>
            <person name="Schuster S.C."/>
            <person name="Carter N.P."/>
            <person name="Harrow J."/>
            <person name="Ning Z."/>
            <person name="Herrero J."/>
            <person name="Searle S.M."/>
            <person name="Enright A."/>
            <person name="Geisler R."/>
            <person name="Plasterk R.H."/>
            <person name="Lee C."/>
            <person name="Westerfield M."/>
            <person name="de Jong P.J."/>
            <person name="Zon L.I."/>
            <person name="Postlethwait J.H."/>
            <person name="Nusslein-Volhard C."/>
            <person name="Hubbard T.J."/>
            <person name="Roest Crollius H."/>
            <person name="Rogers J."/>
            <person name="Stemple D.L."/>
        </authorList>
    </citation>
    <scope>NUCLEOTIDE SEQUENCE [LARGE SCALE GENOMIC DNA]</scope>
    <source>
        <strain>Tuebingen</strain>
    </source>
</reference>
<reference key="2">
    <citation type="journal article" date="2017" name="Am. J. Hum. Genet.">
        <title>Mutations in ARMC9, which encodes a basal body protein, cause Joubert syndrome in humans and ciliopathy phenotypes in zebrafish.</title>
        <authorList>
            <person name="Van De Weghe J.C."/>
            <person name="Rusterholz T.D.S."/>
            <person name="Latour B."/>
            <person name="Grout M.E."/>
            <person name="Aldinger K.A."/>
            <person name="Shaheen R."/>
            <person name="Dempsey J.C."/>
            <person name="Maddirevula S."/>
            <person name="Cheng Y.H."/>
            <person name="Phelps I.G."/>
            <person name="Gesemann M."/>
            <person name="Goel H."/>
            <person name="Birk O.S."/>
            <person name="Alanzi T."/>
            <person name="Rawashdeh R."/>
            <person name="Khan A.O."/>
            <person name="Bamshad M.J."/>
            <person name="Nickerson D.A."/>
            <person name="Neuhauss S.C.F."/>
            <person name="Dobyns W.B."/>
            <person name="Alkuraya F.S."/>
            <person name="Roepman R."/>
            <person name="Bachmann-Gagescu R."/>
            <person name="Doherty D."/>
        </authorList>
    </citation>
    <scope>TISSUE SPECIFICITY</scope>
    <scope>FUNCTION</scope>
    <scope>DISRUPTION PHENOTYPE</scope>
</reference>
<comment type="function">
    <text evidence="2 5">Involved in ciliogenesis (PubMed:28625504). It is required for appropriate acetylation and polyglutamylation of ciliary microtubules, and regulation of cilium length (By similarity). Acts as a positive regulator of hedgehog (Hh) signaling (By similarity).</text>
</comment>
<comment type="subcellular location">
    <subcellularLocation>
        <location evidence="1">Cytoplasm</location>
        <location evidence="1">Cytoskeleton</location>
        <location evidence="1">Cilium basal body</location>
    </subcellularLocation>
    <subcellularLocation>
        <location evidence="2">Cell projection</location>
        <location evidence="2">Cilium</location>
    </subcellularLocation>
    <subcellularLocation>
        <location evidence="1">Cytoplasm</location>
        <location evidence="1">Cytoskeleton</location>
        <location evidence="1">Microtubule organizing center</location>
        <location evidence="1">Centrosome</location>
        <location evidence="1">Centriole</location>
    </subcellularLocation>
    <text evidence="1 2">Localized to the proximal region in cilia. Stimulation of Hh signaling leads to redistribution of ARMC9 toward the ciliary tip within 6 hours, follow by a gradual return to its original proximal location (By similarity). Localizes to the daughter centriole of the primary cilium in RPE1 cells (By similarity).</text>
</comment>
<comment type="tissue specificity">
    <text evidence="5">Expressed in multiple CNS regions, including the cerebellum, all periventricular regions, and all layers of the retina.</text>
</comment>
<comment type="disruption phenotype">
    <text evidence="5">Embryos with CRISPR-induced armc9 null mutations show curved body shape, retinal dystrophy, coloboma, reduced cilia number in ventricles, and shortened cilia in photoreceptor outer segments.</text>
</comment>
<proteinExistence type="evidence at transcript level"/>
<organism>
    <name type="scientific">Danio rerio</name>
    <name type="common">Zebrafish</name>
    <name type="synonym">Brachydanio rerio</name>
    <dbReference type="NCBI Taxonomy" id="7955"/>
    <lineage>
        <taxon>Eukaryota</taxon>
        <taxon>Metazoa</taxon>
        <taxon>Chordata</taxon>
        <taxon>Craniata</taxon>
        <taxon>Vertebrata</taxon>
        <taxon>Euteleostomi</taxon>
        <taxon>Actinopterygii</taxon>
        <taxon>Neopterygii</taxon>
        <taxon>Teleostei</taxon>
        <taxon>Ostariophysi</taxon>
        <taxon>Cypriniformes</taxon>
        <taxon>Danionidae</taxon>
        <taxon>Danioninae</taxon>
        <taxon>Danio</taxon>
    </lineage>
</organism>
<feature type="chain" id="PRO_0000444717" description="LisH domain-containing protein ARMC9">
    <location>
        <begin position="1"/>
        <end position="817"/>
    </location>
</feature>
<feature type="domain" description="LisH" evidence="3">
    <location>
        <begin position="15"/>
        <end position="47"/>
    </location>
</feature>
<feature type="region of interest" description="Disordered" evidence="4">
    <location>
        <begin position="580"/>
        <end position="605"/>
    </location>
</feature>
<feature type="region of interest" description="Disordered" evidence="4">
    <location>
        <begin position="610"/>
        <end position="629"/>
    </location>
</feature>
<feature type="region of interest" description="Disordered" evidence="4">
    <location>
        <begin position="642"/>
        <end position="817"/>
    </location>
</feature>
<feature type="compositionally biased region" description="Acidic residues" evidence="4">
    <location>
        <begin position="586"/>
        <end position="605"/>
    </location>
</feature>
<feature type="compositionally biased region" description="Polar residues" evidence="4">
    <location>
        <begin position="692"/>
        <end position="715"/>
    </location>
</feature>
<feature type="compositionally biased region" description="Polar residues" evidence="4">
    <location>
        <begin position="740"/>
        <end position="750"/>
    </location>
</feature>
<feature type="compositionally biased region" description="Low complexity" evidence="4">
    <location>
        <begin position="805"/>
        <end position="817"/>
    </location>
</feature>
<name>ARMC9_DANRE</name>
<sequence length="817" mass="92179">MSFKKSLKMGENLASESDLLSMISEYLKFGEFEETARTFEKEVKRKGKPALKSAGASRRDSKIISIYEDFLSSFNDGDYKVFSELWAKNIPPEIRDFDPVAQKLEFYLQIHFTIYPLKSPLGSHDKAEFDSRITHFRHYLETRGAALSQTTEFLPFYALPFVPNPMVHPSFQELFQDSWMPDLRDRMEKFLTVTLKASNTPRLLALYNDAGKGNKEAIQQMQLQLTEAERKSAVHIRRFAKLQADHHNLIGVTAELVDSLEATVRGKMISPEYLQGVCVRLFSGNMRQSAAQSLDFTRPGTASSMLRASVAPQRPKDVPLLPSLDYEKLKKDLLTGSDRLKALLLQALRWRLTRSLHGEQRDTVLQAFISNDLLERYSNKQKTVLHLIKCKNEIVRQYTARLINAFASLCDGRLYLSQIPALLPFLLDCLKTEEKESVTRENVLAALQKLSLRRAQQSAMIRDGLIGWLVKELNDSDCLSDYTLEYAISLLMNLCLRTQGKKRCAEEAKYVLKVLTELLGHENHEIRYYVNGALYSILSVPEIREEAKQMSMEEILRCYNKEENPELNRQIEFIIKQLNSATIPEQEPESDDEEDEDDDDDEEDVMEADLDKEEVLQPQPKELSGESLLTTEYLGIMTNMMKTKRRSCPPSSRSIDEPLQRPVTPSSHKNTIAGGEGVYPVTRQRSEDSRFSSRPATRTGSRPSTAESIHQTLATDSDCWRSSVESGLMGSPERHVPAPGQTTNSVQSYSGHMVGFASRPKIPRTPDSDAGSAGRSRLPPLAPQFSNSEPQQSGSRPGSAGGSSGRPSQQSSQSNRK</sequence>
<accession>E7F187</accession>
<dbReference type="EMBL" id="CABZ01045213">
    <property type="status" value="NOT_ANNOTATED_CDS"/>
    <property type="molecule type" value="Genomic_DNA"/>
</dbReference>
<dbReference type="EMBL" id="CABZ01045214">
    <property type="status" value="NOT_ANNOTATED_CDS"/>
    <property type="molecule type" value="Genomic_DNA"/>
</dbReference>
<dbReference type="EMBL" id="CABZ01045215">
    <property type="status" value="NOT_ANNOTATED_CDS"/>
    <property type="molecule type" value="Genomic_DNA"/>
</dbReference>
<dbReference type="EMBL" id="CABZ01045216">
    <property type="status" value="NOT_ANNOTATED_CDS"/>
    <property type="molecule type" value="Genomic_DNA"/>
</dbReference>
<dbReference type="EMBL" id="CABZ01045217">
    <property type="status" value="NOT_ANNOTATED_CDS"/>
    <property type="molecule type" value="Genomic_DNA"/>
</dbReference>
<dbReference type="EMBL" id="CABZ01045218">
    <property type="status" value="NOT_ANNOTATED_CDS"/>
    <property type="molecule type" value="Genomic_DNA"/>
</dbReference>
<dbReference type="EMBL" id="CU570975">
    <property type="status" value="NOT_ANNOTATED_CDS"/>
    <property type="molecule type" value="Genomic_DNA"/>
</dbReference>
<dbReference type="EMBL" id="CU634013">
    <property type="status" value="NOT_ANNOTATED_CDS"/>
    <property type="molecule type" value="Genomic_DNA"/>
</dbReference>
<dbReference type="RefSeq" id="XP_017208939.1">
    <property type="nucleotide sequence ID" value="XM_017353450.1"/>
</dbReference>
<dbReference type="SMR" id="E7F187"/>
<dbReference type="FunCoup" id="E7F187">
    <property type="interactions" value="507"/>
</dbReference>
<dbReference type="STRING" id="7955.ENSDARP00000107015"/>
<dbReference type="PaxDb" id="7955-ENSDARP00000107015"/>
<dbReference type="PeptideAtlas" id="E7F187"/>
<dbReference type="eggNOG" id="ENOG502QQ9W">
    <property type="taxonomic scope" value="Eukaryota"/>
</dbReference>
<dbReference type="HOGENOM" id="CLU_007962_1_0_1"/>
<dbReference type="InParanoid" id="E7F187"/>
<dbReference type="OrthoDB" id="538223at2759"/>
<dbReference type="TreeFam" id="TF317676"/>
<dbReference type="Proteomes" id="UP000000437">
    <property type="component" value="Unplaced"/>
</dbReference>
<dbReference type="GO" id="GO:0005814">
    <property type="term" value="C:centriole"/>
    <property type="evidence" value="ECO:0000250"/>
    <property type="project" value="UniProtKB"/>
</dbReference>
<dbReference type="GO" id="GO:0036064">
    <property type="term" value="C:ciliary basal body"/>
    <property type="evidence" value="ECO:0000250"/>
    <property type="project" value="UniProtKB"/>
</dbReference>
<dbReference type="GO" id="GO:0097542">
    <property type="term" value="C:ciliary tip"/>
    <property type="evidence" value="ECO:0000250"/>
    <property type="project" value="UniProtKB"/>
</dbReference>
<dbReference type="GO" id="GO:0005929">
    <property type="term" value="C:cilium"/>
    <property type="evidence" value="ECO:0000250"/>
    <property type="project" value="UniProtKB"/>
</dbReference>
<dbReference type="GO" id="GO:0005737">
    <property type="term" value="C:cytoplasm"/>
    <property type="evidence" value="ECO:0007669"/>
    <property type="project" value="UniProtKB-KW"/>
</dbReference>
<dbReference type="GO" id="GO:0060271">
    <property type="term" value="P:cilium assembly"/>
    <property type="evidence" value="ECO:0000315"/>
    <property type="project" value="UniProtKB"/>
</dbReference>
<dbReference type="GO" id="GO:0045880">
    <property type="term" value="P:positive regulation of smoothened signaling pathway"/>
    <property type="evidence" value="ECO:0000250"/>
    <property type="project" value="UniProtKB"/>
</dbReference>
<dbReference type="FunFam" id="1.25.10.10:FF:000124">
    <property type="entry name" value="lisH domain-containing protein ARMC9 isoform X1"/>
    <property type="match status" value="1"/>
</dbReference>
<dbReference type="Gene3D" id="1.25.10.10">
    <property type="entry name" value="Leucine-rich Repeat Variant"/>
    <property type="match status" value="1"/>
</dbReference>
<dbReference type="InterPro" id="IPR011989">
    <property type="entry name" value="ARM-like"/>
</dbReference>
<dbReference type="InterPro" id="IPR016024">
    <property type="entry name" value="ARM-type_fold"/>
</dbReference>
<dbReference type="InterPro" id="IPR040369">
    <property type="entry name" value="ARMC9"/>
</dbReference>
<dbReference type="InterPro" id="IPR048959">
    <property type="entry name" value="ARMC9_ARM_dom"/>
</dbReference>
<dbReference type="InterPro" id="IPR056327">
    <property type="entry name" value="ARMC9_CTLH-like_dom"/>
</dbReference>
<dbReference type="InterPro" id="IPR048957">
    <property type="entry name" value="ARMC9_LisH"/>
</dbReference>
<dbReference type="InterPro" id="IPR006594">
    <property type="entry name" value="LisH"/>
</dbReference>
<dbReference type="PANTHER" id="PTHR14881">
    <property type="entry name" value="LISH DOMAIN-CONTAINING PROTEIN ARMC9"/>
    <property type="match status" value="1"/>
</dbReference>
<dbReference type="PANTHER" id="PTHR14881:SF4">
    <property type="entry name" value="LISH DOMAIN-CONTAINING PROTEIN ARMC9"/>
    <property type="match status" value="1"/>
</dbReference>
<dbReference type="Pfam" id="PF21050">
    <property type="entry name" value="ARMC9_ARM"/>
    <property type="match status" value="1"/>
</dbReference>
<dbReference type="Pfam" id="PF21051">
    <property type="entry name" value="ARMC9_LisH"/>
    <property type="match status" value="1"/>
</dbReference>
<dbReference type="Pfam" id="PF23138">
    <property type="entry name" value="CTLH_Armc9"/>
    <property type="match status" value="1"/>
</dbReference>
<dbReference type="SMART" id="SM00667">
    <property type="entry name" value="LisH"/>
    <property type="match status" value="1"/>
</dbReference>
<dbReference type="SUPFAM" id="SSF48371">
    <property type="entry name" value="ARM repeat"/>
    <property type="match status" value="1"/>
</dbReference>
<dbReference type="PROSITE" id="PS50896">
    <property type="entry name" value="LISH"/>
    <property type="match status" value="1"/>
</dbReference>
<protein>
    <recommendedName>
        <fullName>LisH domain-containing protein ARMC9</fullName>
    </recommendedName>
    <alternativeName>
        <fullName>Armadillo repeat-containing protein 9</fullName>
    </alternativeName>
</protein>
<keyword id="KW-0966">Cell projection</keyword>
<keyword id="KW-0970">Cilium biogenesis/degradation</keyword>
<keyword id="KW-0963">Cytoplasm</keyword>
<keyword id="KW-0206">Cytoskeleton</keyword>
<keyword id="KW-1185">Reference proteome</keyword>
<gene>
    <name type="primary">armc9</name>
    <name type="synonym">si:ch1073-404h7.1</name>
</gene>
<evidence type="ECO:0000250" key="1">
    <source>
        <dbReference type="UniProtKB" id="Q7Z3E5"/>
    </source>
</evidence>
<evidence type="ECO:0000250" key="2">
    <source>
        <dbReference type="UniProtKB" id="Q9D2I5"/>
    </source>
</evidence>
<evidence type="ECO:0000255" key="3">
    <source>
        <dbReference type="PROSITE-ProRule" id="PRU00126"/>
    </source>
</evidence>
<evidence type="ECO:0000256" key="4">
    <source>
        <dbReference type="SAM" id="MobiDB-lite"/>
    </source>
</evidence>
<evidence type="ECO:0000269" key="5">
    <source>
    </source>
</evidence>